<dbReference type="EMBL" id="AF438165">
    <property type="protein sequence ID" value="AAL73872.1"/>
    <property type="molecule type" value="Genomic_DNA"/>
</dbReference>
<dbReference type="RefSeq" id="NP_570555.1">
    <property type="nucleotide sequence ID" value="NC_003391.1"/>
</dbReference>
<dbReference type="SMR" id="Q77FQ3"/>
<dbReference type="KEGG" id="vg:932496"/>
<dbReference type="Proteomes" id="UP000152221">
    <property type="component" value="Genome"/>
</dbReference>
<dbReference type="GO" id="GO:0030430">
    <property type="term" value="C:host cell cytoplasm"/>
    <property type="evidence" value="ECO:0007669"/>
    <property type="project" value="UniProtKB-SubCell"/>
</dbReference>
<dbReference type="GO" id="GO:0046872">
    <property type="term" value="F:metal ion binding"/>
    <property type="evidence" value="ECO:0007669"/>
    <property type="project" value="InterPro"/>
</dbReference>
<dbReference type="GO" id="GO:0006801">
    <property type="term" value="P:superoxide metabolic process"/>
    <property type="evidence" value="ECO:0007669"/>
    <property type="project" value="InterPro"/>
</dbReference>
<dbReference type="Gene3D" id="2.60.40.200">
    <property type="entry name" value="Superoxide dismutase, copper/zinc binding domain"/>
    <property type="match status" value="1"/>
</dbReference>
<dbReference type="InterPro" id="IPR036423">
    <property type="entry name" value="SOD-like_Cu/Zn_dom_sf"/>
</dbReference>
<dbReference type="SUPFAM" id="SSF49329">
    <property type="entry name" value="Cu,Zn superoxide dismutase-like"/>
    <property type="match status" value="1"/>
</dbReference>
<comment type="function">
    <text evidence="1">Virion protein with no enzymatic activity.</text>
</comment>
<comment type="subcellular location">
    <subcellularLocation>
        <location evidence="1">Host cytoplasm</location>
    </subcellularLocation>
</comment>
<comment type="similarity">
    <text evidence="2">Belongs to the Cu-Zn superoxide dismutase family.</text>
</comment>
<feature type="chain" id="PRO_0000164171" description="Cu-Zn superoxide dismutase-like protein">
    <location>
        <begin position="1"/>
        <end position="125"/>
    </location>
</feature>
<feature type="disulfide bond" evidence="1">
    <location>
        <begin position="52"/>
        <end position="102"/>
    </location>
</feature>
<protein>
    <recommendedName>
        <fullName>Cu-Zn superoxide dismutase-like protein</fullName>
    </recommendedName>
</protein>
<proteinExistence type="inferred from homology"/>
<keyword id="KW-1015">Disulfide bond</keyword>
<keyword id="KW-1035">Host cytoplasm</keyword>
<organism>
    <name type="scientific">Camelpox virus (strain M-96)</name>
    <dbReference type="NCBI Taxonomy" id="203173"/>
    <lineage>
        <taxon>Viruses</taxon>
        <taxon>Varidnaviria</taxon>
        <taxon>Bamfordvirae</taxon>
        <taxon>Nucleocytoviricota</taxon>
        <taxon>Pokkesviricetes</taxon>
        <taxon>Chitovirales</taxon>
        <taxon>Poxviridae</taxon>
        <taxon>Chordopoxvirinae</taxon>
        <taxon>Orthopoxvirus</taxon>
        <taxon>Camelpox virus</taxon>
    </lineage>
</organism>
<name>SODL_CAMPM</name>
<sequence>MAVCIIDHDNIRGVIYFEPVHGKDKVLGSVIGLKSGTYNLIIHRYGDISRGCDSIGSPEIFIGNIFVNRYGVAYVYLDTDVNISTIIGKALSISKNNQRLACGVIGISYINEKIIHFLTINENGV</sequence>
<reference key="1">
    <citation type="journal article" date="2002" name="Virology">
        <title>The genome of camelpox virus.</title>
        <authorList>
            <person name="Afonso C.L."/>
            <person name="Tulman E.R."/>
            <person name="Lu Z."/>
            <person name="Zsak L."/>
            <person name="Sandybaev N.T."/>
            <person name="Kerembekova U.Z."/>
            <person name="Zaitsev V.L."/>
            <person name="Kutish G.F."/>
            <person name="Rock D.L."/>
        </authorList>
    </citation>
    <scope>NUCLEOTIDE SEQUENCE [LARGE SCALE GENOMIC DNA]</scope>
</reference>
<evidence type="ECO:0000250" key="1"/>
<evidence type="ECO:0000305" key="2"/>
<gene>
    <name type="ordered locus">CMLV165</name>
</gene>
<accession>Q77FQ3</accession>
<organismHost>
    <name type="scientific">Camelus</name>
    <dbReference type="NCBI Taxonomy" id="9836"/>
</organismHost>